<gene>
    <name evidence="39 41" type="primary">RAD17</name>
    <name type="synonym">R24L</name>
</gene>
<accession>O75943</accession>
<accession>A8K8X2</accession>
<accession>D3DWA5</accession>
<accession>O75714</accession>
<accession>Q7Z3S4</accession>
<accession>Q9UNK7</accession>
<accession>Q9UNR7</accession>
<accession>Q9UNR8</accession>
<accession>Q9UPF5</accession>
<organism>
    <name type="scientific">Homo sapiens</name>
    <name type="common">Human</name>
    <dbReference type="NCBI Taxonomy" id="9606"/>
    <lineage>
        <taxon>Eukaryota</taxon>
        <taxon>Metazoa</taxon>
        <taxon>Chordata</taxon>
        <taxon>Craniata</taxon>
        <taxon>Vertebrata</taxon>
        <taxon>Euteleostomi</taxon>
        <taxon>Mammalia</taxon>
        <taxon>Eutheria</taxon>
        <taxon>Euarchontoglires</taxon>
        <taxon>Primates</taxon>
        <taxon>Haplorrhini</taxon>
        <taxon>Catarrhini</taxon>
        <taxon>Hominidae</taxon>
        <taxon>Homo</taxon>
    </lineage>
</organism>
<comment type="function">
    <text evidence="4 9 12 13 15 16 17 19 21 23 24 25">Essential for sustained cell growth, maintenance of chromosomal stability, and ATR-dependent checkpoint activation upon DNA damage (PubMed:10208430, PubMed:11418864, PubMed:11687627, PubMed:11799063, PubMed:12672690, PubMed:14624239, PubMed:15235112). Has a weak ATPase activity required for binding to chromatin (PubMed:10208430, PubMed:11418864, PubMed:11687627, PubMed:11799063, PubMed:12672690, PubMed:14624239, PubMed:15235112). Participates in the recruitment of the 9-1-1 (RAD1-RAD9-HUS1) complex and RHNO1 onto chromatin, and in CHEK1 activation (PubMed:21659603). Involved in homologous recombination by mediating recruitment of the MRN complex to DNA damage sites (PubMed:24534091). May also serve as a sensor of DNA replication progression (PubMed:12578958, PubMed:14500819, PubMed:15538388).</text>
</comment>
<comment type="subunit">
    <text evidence="7 8 9 10 12 14 15 17 18 19 23 26 27">Part of a DNA-binding complex containing RFC2, RFC3, RFC4 and RFC5 (PubMed:10884395, PubMed:11572977, PubMed:11687627, PubMed:12400013, PubMed:14624239). Interacts with RAD1 and RAD9 within the 9-1-1 (RAD1-RAD9-HUS1) complex (PubMed:10884395, PubMed:11418864, PubMed:12578958, PubMed:36841485, PubMed:9660800). Interacts with RAD9B, POLE, SNU13 and MCM7 (PubMed:10593953, PubMed:14500819, PubMed:14611806, PubMed:15538388). DNA damage promotes interaction with ATR or ATM and disrupts interaction with the 9-1-1 (RAD1-RAD9-HUS1) complex (PubMed:10884395, PubMed:11418864, PubMed:12578958). Interacts (when phosphorylated) with NBN; promoting recruitment of the MRN complex to DNA damage sites (PubMed:24534091).</text>
</comment>
<comment type="interaction">
    <interactant intactId="EBI-968231">
        <id>O75943</id>
    </interactant>
    <interactant intactId="EBI-724997">
        <id>Q9UM11</id>
        <label>FZR1</label>
    </interactant>
    <organismsDiffer>false</organismsDiffer>
    <experiments>2</experiments>
</comment>
<comment type="interaction">
    <interactant intactId="EBI-968231">
        <id>O75943</id>
    </interactant>
    <interactant intactId="EBI-396513">
        <id>P49959</id>
        <label>MRE11</label>
    </interactant>
    <organismsDiffer>false</organismsDiffer>
    <experiments>2</experiments>
</comment>
<comment type="interaction">
    <interactant intactId="EBI-968231">
        <id>O75943</id>
    </interactant>
    <interactant intactId="EBI-494844">
        <id>O60934</id>
        <label>NBN</label>
    </interactant>
    <organismsDiffer>false</organismsDiffer>
    <experiments>5</experiments>
</comment>
<comment type="interaction">
    <interactant intactId="EBI-968231">
        <id>O75943</id>
    </interactant>
    <interactant intactId="EBI-495494">
        <id>Q92878</id>
        <label>RAD50</label>
    </interactant>
    <organismsDiffer>false</organismsDiffer>
    <experiments>2</experiments>
</comment>
<comment type="interaction">
    <interactant intactId="EBI-968231">
        <id>O75943</id>
    </interactant>
    <interactant intactId="EBI-2606224">
        <id>Q99638</id>
        <label>RAD9A</label>
    </interactant>
    <organismsDiffer>false</organismsDiffer>
    <experiments>2</experiments>
</comment>
<comment type="subcellular location">
    <subcellularLocation>
        <location evidence="5 7 13 14">Nucleus</location>
    </subcellularLocation>
    <subcellularLocation>
        <location evidence="25">Chromosome</location>
    </subcellularLocation>
    <text evidence="13 25">Phosphorylated form redistributes to discrete nuclear foci upon DNA damage (PubMed:11799063). Localizes to DNA double-strand breaks (DSBs) (PubMed:24534091).</text>
</comment>
<comment type="alternative products">
    <event type="alternative splicing"/>
    <isoform>
        <id>O75943-1</id>
        <name>1</name>
        <name>Rad17Sp</name>
        <name>FM2</name>
        <sequence type="displayed"/>
    </isoform>
    <isoform>
        <id>O75943-2</id>
        <name>2</name>
        <name>Rad17Sp2</name>
        <name>FM1</name>
        <sequence type="described" ref="VSP_013308"/>
    </isoform>
    <isoform>
        <id>O75943-3</id>
        <name>3</name>
        <name>FM3</name>
        <sequence type="described" ref="VSP_013306"/>
    </isoform>
    <isoform>
        <id>O75943-4</id>
        <name>4</name>
        <name>FM4</name>
        <sequence type="described" ref="VSP_013307 VSP_013309"/>
    </isoform>
</comment>
<comment type="tissue specificity">
    <text evidence="4 5 6 11 27">Overexpressed in various cancer cell lines and in colon carcinoma (at protein level). Isoform 2 and isoform 3 are the most abundant isoforms in non irradiated cells (at protein level). Ubiquitous at low levels. Highly expressed in testis, where it is expressed within the germinal epithelium of the seminiferous tubuli. Weakly expressed in seminomas (testicular tumors).</text>
</comment>
<comment type="induction">
    <molecule>Isoform 1</molecule>
    <text evidence="11">Induced by X-ray irradiation.</text>
</comment>
<comment type="induction">
    <molecule>Isoform 3</molecule>
    <text evidence="11">Induced by X-ray irradiation.</text>
</comment>
<comment type="induction">
    <molecule>Isoform 4</molecule>
    <text evidence="11">Induced by X-ray irradiation.</text>
</comment>
<comment type="PTM">
    <text evidence="9 12 13 17 20 25">Phosphorylation on Ser-646 and Ser-656 is cell cycle-regulated, enhanced by genotoxic stress, and required for activation of checkpoint signaling (PubMed:11418864, PubMed:14500819, PubMed:14871926). Phosphorylation is mediated by ATR upon UV or replication arrest, whereas it may be mediated both by ATR and ATM upon ionizing radiation (PubMed:11418864, PubMed:11799063). Phosphorylation on both sites is required for interaction with RAD1 but dispensable for interaction with RFC3 or RFC4 (PubMed:11687627). Phosphorylation at Thr-633 by ATM in response to DNA damage promotes interaction with NBN and recruitment of the MRN complex to DNA damage sites (PubMed:24534091).</text>
</comment>
<comment type="similarity">
    <text evidence="40">Belongs to the rad17/RAD24 family.</text>
</comment>
<reference key="1">
    <citation type="journal article" date="1998" name="Genomics">
        <title>cDNA cloning and gene mapping of human homologs for Schizosaccharomyces pombe rad17, rad1, and hus1 and cloning of homologs from mouse, Caenorhabditis elegans, and Drosophila melanogaster.</title>
        <authorList>
            <person name="Dean F.B."/>
            <person name="Lian L."/>
            <person name="O'Donnell M."/>
        </authorList>
    </citation>
    <scope>NUCLEOTIDE SEQUENCE [MRNA] (ISOFORM 2)</scope>
</reference>
<reference key="2">
    <citation type="journal article" date="1998" name="J. Biol. Chem.">
        <title>Identification of a human homologue of the Schizosaccharomyces pombe rad17+ checkpoint gene.</title>
        <authorList>
            <person name="Parker A.E."/>
            <person name="Van de Weyer I."/>
            <person name="Laus M.C."/>
            <person name="Verhasselt P."/>
            <person name="Luyten W.H.M.L."/>
        </authorList>
    </citation>
    <scope>NUCLEOTIDE SEQUENCE [MRNA] (ISOFORM 2)</scope>
    <scope>TISSUE SPECIFICITY</scope>
    <scope>INTERACTION WITH RAD1</scope>
    <source>
        <tissue>Neuroblastoma</tissue>
    </source>
</reference>
<reference key="3">
    <citation type="journal article" date="1999" name="J. Biol. Chem.">
        <authorList>
            <person name="Parker A.E."/>
            <person name="Van de Weyer I."/>
            <person name="Laus M.C."/>
            <person name="Verhasselt P."/>
            <person name="Luyten W.H.M.L."/>
        </authorList>
    </citation>
    <scope>ERRATUM OF PUBMED:9660800</scope>
</reference>
<reference key="4">
    <citation type="journal article" date="1999" name="Cancer Res.">
        <title>HRad17, a human homologue of the Schizosaccharomyces pombe checkpoint gene rad17, is overexpressed in colon carcinoma.</title>
        <authorList>
            <person name="Bao S."/>
            <person name="Chang M.-S."/>
            <person name="Auclair D."/>
            <person name="Sun Y."/>
            <person name="Wang Y."/>
            <person name="Wong W.-K."/>
            <person name="Zhang J."/>
            <person name="Liu Y."/>
            <person name="Qian X."/>
            <person name="Sutherland R."/>
            <person name="Magi-Galluzi C."/>
            <person name="Weisberg E."/>
            <person name="Cheng E.Y.S."/>
            <person name="Hao L."/>
            <person name="Sasaki H."/>
            <person name="Campbell M.S."/>
            <person name="Kraeft S.-K."/>
            <person name="Loda M."/>
            <person name="Lo K.-M."/>
            <person name="Chen L.B."/>
        </authorList>
    </citation>
    <scope>NUCLEOTIDE SEQUENCE [MRNA] (ISOFORM 2)</scope>
    <scope>TISSUE SPECIFICITY</scope>
    <scope>SUBCELLULAR LOCATION</scope>
    <scope>VARIANT ARG-557</scope>
    <source>
        <tissue>Fibroblast</tissue>
    </source>
</reference>
<reference key="5">
    <citation type="journal article" date="1999" name="Genomics">
        <title>Human and mouse homologs of the Schizosaccharomyces pombe rad17+ cell cycle checkpoint control gene.</title>
        <authorList>
            <person name="Bluyssen H.A.R."/>
            <person name="Naus N.C."/>
            <person name="van Os R.I."/>
            <person name="Jaspers I."/>
            <person name="Hoeijmakers J.H.J."/>
            <person name="de Klein A."/>
        </authorList>
    </citation>
    <scope>NUCLEOTIDE SEQUENCE [MRNA] (ISOFORM 1)</scope>
    <scope>ALTERNATIVE SPLICING</scope>
    <source>
        <tissue>Thymus</tissue>
    </source>
</reference>
<reference key="6">
    <citation type="journal article" date="1999" name="Hum. Genet.">
        <title>Human and mouse RAD17 genes: identification, localization, genomic structure and histological expression pattern in normal testis and seminoma.</title>
        <authorList>
            <person name="von Deimling F."/>
            <person name="Scharf J.M."/>
            <person name="Liehr T."/>
            <person name="Rothe M."/>
            <person name="Kelter A.-R."/>
            <person name="Albers P."/>
            <person name="Dietrich W.F."/>
            <person name="Kunkel L.M."/>
            <person name="Wernert N."/>
            <person name="Wirth B."/>
        </authorList>
    </citation>
    <scope>NUCLEOTIDE SEQUENCE [GENOMIC DNA / MRNA] (ISOFORM 2)</scope>
    <scope>TISSUE SPECIFICITY</scope>
    <source>
        <tissue>Fetal brain</tissue>
    </source>
</reference>
<reference key="7">
    <citation type="journal article" date="1999" name="Oncogene">
        <title>hRAD17, a structural homolog of the Schizosaccharomyces pombe RAD17 cell cycle checkpoint gene, stimulates p53 accumulation.</title>
        <authorList>
            <person name="Li L."/>
            <person name="Peterson C.A."/>
            <person name="Kanter-Smoler G."/>
            <person name="Wei Y.-F."/>
            <person name="Ramagli L.S."/>
            <person name="Sunnerhagen P."/>
            <person name="Siciliano M.J."/>
            <person name="Legerski R.J."/>
        </authorList>
    </citation>
    <scope>NUCLEOTIDE SEQUENCE [MRNA] (ISOFORM 2)</scope>
    <scope>TISSUE SPECIFICITY</scope>
    <scope>FUNCTION</scope>
    <source>
        <tissue>Cervix carcinoma</tissue>
    </source>
</reference>
<reference key="8">
    <citation type="journal article" date="1999" name="Zhonghua Yi Xue Za Zhi">
        <title>Human hR24L gene is involved in DNA excision repair and recombination repair.</title>
        <authorList>
            <person name="Han Y."/>
            <person name="Zhu Y."/>
        </authorList>
    </citation>
    <scope>NUCLEOTIDE SEQUENCE [MRNA] (ISOFORM 2)</scope>
    <source>
        <tissue>Liver</tissue>
    </source>
</reference>
<reference key="9">
    <citation type="journal article" date="2001" name="Gene">
        <title>Multiple alternative splicing forms of human RAD17 and their differential response to ionizing radiation.</title>
        <authorList>
            <person name="Chen M.-S."/>
            <person name="Higashikubo R."/>
            <person name="Laszlo A."/>
            <person name="Roti Roti J."/>
        </authorList>
    </citation>
    <scope>NUCLEOTIDE SEQUENCE [MRNA] (ISOFORMS 1; 2; 3 AND 4)</scope>
    <scope>INDUCTION</scope>
    <scope>TISSUE SPECIFICITY</scope>
    <source>
        <tissue>Colon</tissue>
        <tissue>Fibroblast</tissue>
    </source>
</reference>
<reference key="10">
    <citation type="journal article" date="2001" name="Genome Res.">
        <title>Towards a catalog of human genes and proteins: sequencing and analysis of 500 novel complete protein coding human cDNAs.</title>
        <authorList>
            <person name="Wiemann S."/>
            <person name="Weil B."/>
            <person name="Wellenreuther R."/>
            <person name="Gassenhuber J."/>
            <person name="Glassl S."/>
            <person name="Ansorge W."/>
            <person name="Boecher M."/>
            <person name="Bloecker H."/>
            <person name="Bauersachs S."/>
            <person name="Blum H."/>
            <person name="Lauber J."/>
            <person name="Duesterhoeft A."/>
            <person name="Beyer A."/>
            <person name="Koehrer K."/>
            <person name="Strack N."/>
            <person name="Mewes H.-W."/>
            <person name="Ottenwaelder B."/>
            <person name="Obermaier B."/>
            <person name="Tampe J."/>
            <person name="Heubner D."/>
            <person name="Wambutt R."/>
            <person name="Korn B."/>
            <person name="Klein M."/>
            <person name="Poustka A."/>
        </authorList>
    </citation>
    <scope>NUCLEOTIDE SEQUENCE [LARGE SCALE MRNA] (ISOFORM 2)</scope>
    <source>
        <tissue>Testis</tissue>
    </source>
</reference>
<reference key="11">
    <citation type="journal article" date="2004" name="Nat. Genet.">
        <title>Complete sequencing and characterization of 21,243 full-length human cDNAs.</title>
        <authorList>
            <person name="Ota T."/>
            <person name="Suzuki Y."/>
            <person name="Nishikawa T."/>
            <person name="Otsuki T."/>
            <person name="Sugiyama T."/>
            <person name="Irie R."/>
            <person name="Wakamatsu A."/>
            <person name="Hayashi K."/>
            <person name="Sato H."/>
            <person name="Nagai K."/>
            <person name="Kimura K."/>
            <person name="Makita H."/>
            <person name="Sekine M."/>
            <person name="Obayashi M."/>
            <person name="Nishi T."/>
            <person name="Shibahara T."/>
            <person name="Tanaka T."/>
            <person name="Ishii S."/>
            <person name="Yamamoto J."/>
            <person name="Saito K."/>
            <person name="Kawai Y."/>
            <person name="Isono Y."/>
            <person name="Nakamura Y."/>
            <person name="Nagahari K."/>
            <person name="Murakami K."/>
            <person name="Yasuda T."/>
            <person name="Iwayanagi T."/>
            <person name="Wagatsuma M."/>
            <person name="Shiratori A."/>
            <person name="Sudo H."/>
            <person name="Hosoiri T."/>
            <person name="Kaku Y."/>
            <person name="Kodaira H."/>
            <person name="Kondo H."/>
            <person name="Sugawara M."/>
            <person name="Takahashi M."/>
            <person name="Kanda K."/>
            <person name="Yokoi T."/>
            <person name="Furuya T."/>
            <person name="Kikkawa E."/>
            <person name="Omura Y."/>
            <person name="Abe K."/>
            <person name="Kamihara K."/>
            <person name="Katsuta N."/>
            <person name="Sato K."/>
            <person name="Tanikawa M."/>
            <person name="Yamazaki M."/>
            <person name="Ninomiya K."/>
            <person name="Ishibashi T."/>
            <person name="Yamashita H."/>
            <person name="Murakawa K."/>
            <person name="Fujimori K."/>
            <person name="Tanai H."/>
            <person name="Kimata M."/>
            <person name="Watanabe M."/>
            <person name="Hiraoka S."/>
            <person name="Chiba Y."/>
            <person name="Ishida S."/>
            <person name="Ono Y."/>
            <person name="Takiguchi S."/>
            <person name="Watanabe S."/>
            <person name="Yosida M."/>
            <person name="Hotuta T."/>
            <person name="Kusano J."/>
            <person name="Kanehori K."/>
            <person name="Takahashi-Fujii A."/>
            <person name="Hara H."/>
            <person name="Tanase T.-O."/>
            <person name="Nomura Y."/>
            <person name="Togiya S."/>
            <person name="Komai F."/>
            <person name="Hara R."/>
            <person name="Takeuchi K."/>
            <person name="Arita M."/>
            <person name="Imose N."/>
            <person name="Musashino K."/>
            <person name="Yuuki H."/>
            <person name="Oshima A."/>
            <person name="Sasaki N."/>
            <person name="Aotsuka S."/>
            <person name="Yoshikawa Y."/>
            <person name="Matsunawa H."/>
            <person name="Ichihara T."/>
            <person name="Shiohata N."/>
            <person name="Sano S."/>
            <person name="Moriya S."/>
            <person name="Momiyama H."/>
            <person name="Satoh N."/>
            <person name="Takami S."/>
            <person name="Terashima Y."/>
            <person name="Suzuki O."/>
            <person name="Nakagawa S."/>
            <person name="Senoh A."/>
            <person name="Mizoguchi H."/>
            <person name="Goto Y."/>
            <person name="Shimizu F."/>
            <person name="Wakebe H."/>
            <person name="Hishigaki H."/>
            <person name="Watanabe T."/>
            <person name="Sugiyama A."/>
            <person name="Takemoto M."/>
            <person name="Kawakami B."/>
            <person name="Yamazaki M."/>
            <person name="Watanabe K."/>
            <person name="Kumagai A."/>
            <person name="Itakura S."/>
            <person name="Fukuzumi Y."/>
            <person name="Fujimori Y."/>
            <person name="Komiyama M."/>
            <person name="Tashiro H."/>
            <person name="Tanigami A."/>
            <person name="Fujiwara T."/>
            <person name="Ono T."/>
            <person name="Yamada K."/>
            <person name="Fujii Y."/>
            <person name="Ozaki K."/>
            <person name="Hirao M."/>
            <person name="Ohmori Y."/>
            <person name="Kawabata A."/>
            <person name="Hikiji T."/>
            <person name="Kobatake N."/>
            <person name="Inagaki H."/>
            <person name="Ikema Y."/>
            <person name="Okamoto S."/>
            <person name="Okitani R."/>
            <person name="Kawakami T."/>
            <person name="Noguchi S."/>
            <person name="Itoh T."/>
            <person name="Shigeta K."/>
            <person name="Senba T."/>
            <person name="Matsumura K."/>
            <person name="Nakajima Y."/>
            <person name="Mizuno T."/>
            <person name="Morinaga M."/>
            <person name="Sasaki M."/>
            <person name="Togashi T."/>
            <person name="Oyama M."/>
            <person name="Hata H."/>
            <person name="Watanabe M."/>
            <person name="Komatsu T."/>
            <person name="Mizushima-Sugano J."/>
            <person name="Satoh T."/>
            <person name="Shirai Y."/>
            <person name="Takahashi Y."/>
            <person name="Nakagawa K."/>
            <person name="Okumura K."/>
            <person name="Nagase T."/>
            <person name="Nomura N."/>
            <person name="Kikuchi H."/>
            <person name="Masuho Y."/>
            <person name="Yamashita R."/>
            <person name="Nakai K."/>
            <person name="Yada T."/>
            <person name="Nakamura Y."/>
            <person name="Ohara O."/>
            <person name="Isogai T."/>
            <person name="Sugano S."/>
        </authorList>
    </citation>
    <scope>NUCLEOTIDE SEQUENCE [LARGE SCALE MRNA] (ISOFORM 2)</scope>
    <source>
        <tissue>Testis</tissue>
    </source>
</reference>
<reference key="12">
    <citation type="journal article" date="2007" name="BMC Genomics">
        <title>The full-ORF clone resource of the German cDNA consortium.</title>
        <authorList>
            <person name="Bechtel S."/>
            <person name="Rosenfelder H."/>
            <person name="Duda A."/>
            <person name="Schmidt C.P."/>
            <person name="Ernst U."/>
            <person name="Wellenreuther R."/>
            <person name="Mehrle A."/>
            <person name="Schuster C."/>
            <person name="Bahr A."/>
            <person name="Bloecker H."/>
            <person name="Heubner D."/>
            <person name="Hoerlein A."/>
            <person name="Michel G."/>
            <person name="Wedler H."/>
            <person name="Koehrer K."/>
            <person name="Ottenwaelder B."/>
            <person name="Poustka A."/>
            <person name="Wiemann S."/>
            <person name="Schupp I."/>
        </authorList>
    </citation>
    <scope>NUCLEOTIDE SEQUENCE [LARGE SCALE MRNA] (ISOFORM 2)</scope>
    <source>
        <tissue>Fetal brain</tissue>
    </source>
</reference>
<reference key="13">
    <citation type="submission" date="2004-04" db="EMBL/GenBank/DDBJ databases">
        <authorList>
            <consortium name="NIEHS SNPs program"/>
        </authorList>
    </citation>
    <scope>NUCLEOTIDE SEQUENCE [GENOMIC DNA]</scope>
    <scope>VARIANTS ILE-32; LEU-487; GLU-535 AND ARG-557</scope>
</reference>
<reference key="14">
    <citation type="submission" date="2005-09" db="EMBL/GenBank/DDBJ databases">
        <authorList>
            <person name="Mural R.J."/>
            <person name="Istrail S."/>
            <person name="Sutton G.G."/>
            <person name="Florea L."/>
            <person name="Halpern A.L."/>
            <person name="Mobarry C.M."/>
            <person name="Lippert R."/>
            <person name="Walenz B."/>
            <person name="Shatkay H."/>
            <person name="Dew I."/>
            <person name="Miller J.R."/>
            <person name="Flanigan M.J."/>
            <person name="Edwards N.J."/>
            <person name="Bolanos R."/>
            <person name="Fasulo D."/>
            <person name="Halldorsson B.V."/>
            <person name="Hannenhalli S."/>
            <person name="Turner R."/>
            <person name="Yooseph S."/>
            <person name="Lu F."/>
            <person name="Nusskern D.R."/>
            <person name="Shue B.C."/>
            <person name="Zheng X.H."/>
            <person name="Zhong F."/>
            <person name="Delcher A.L."/>
            <person name="Huson D.H."/>
            <person name="Kravitz S.A."/>
            <person name="Mouchard L."/>
            <person name="Reinert K."/>
            <person name="Remington K.A."/>
            <person name="Clark A.G."/>
            <person name="Waterman M.S."/>
            <person name="Eichler E.E."/>
            <person name="Adams M.D."/>
            <person name="Hunkapiller M.W."/>
            <person name="Myers E.W."/>
            <person name="Venter J.C."/>
        </authorList>
    </citation>
    <scope>NUCLEOTIDE SEQUENCE [LARGE SCALE GENOMIC DNA]</scope>
</reference>
<reference key="15">
    <citation type="journal article" date="2004" name="Genome Res.">
        <title>The status, quality, and expansion of the NIH full-length cDNA project: the Mammalian Gene Collection (MGC).</title>
        <authorList>
            <consortium name="The MGC Project Team"/>
        </authorList>
    </citation>
    <scope>NUCLEOTIDE SEQUENCE [LARGE SCALE MRNA] (ISOFORM 2)</scope>
    <scope>VARIANT ARG-557</scope>
    <source>
        <tissue>Brain</tissue>
    </source>
</reference>
<reference key="16">
    <citation type="journal article" date="1999" name="J. Biol. Chem.">
        <title>HRad17 colocalizes with NHP2L1 in the nucleolus and redistributes after UV irradiation.</title>
        <authorList>
            <person name="Chang M.-S."/>
            <person name="Sasaki H."/>
            <person name="Campbell M.S."/>
            <person name="Kraeft S.-K."/>
            <person name="Sutherland R."/>
            <person name="Yang C.-Y."/>
            <person name="Liu Y."/>
            <person name="Auclair D."/>
            <person name="Hao L."/>
            <person name="Sonoda H."/>
            <person name="Ferland L.H."/>
            <person name="Chen L.B."/>
        </authorList>
    </citation>
    <scope>SUBCELLULAR LOCATION</scope>
    <scope>INTERACTION WITH SNU13</scope>
</reference>
<reference key="17">
    <citation type="journal article" date="2000" name="J. Biol. Chem.">
        <title>The human checkpoint protein hRad17 interacts with the PCNA-like proteins hRad1, hHus1, and hRad9.</title>
        <authorList>
            <person name="Rauen M."/>
            <person name="Burtelow M.A."/>
            <person name="Dufault V.M."/>
            <person name="Karnitz L.M."/>
        </authorList>
    </citation>
    <scope>INTERACTION WITH THE RAD1/RAD9/HUS1 COMPLEX AND RFC3</scope>
    <scope>MUTAGENESIS OF LYS-143</scope>
</reference>
<reference key="18">
    <citation type="journal article" date="2001" name="Nature">
        <title>ATR/ATM-mediated phosphorylation of human Rad17 is required for genotoxic stress responses.</title>
        <authorList>
            <person name="Bao S."/>
            <person name="Tibbetts R.S."/>
            <person name="Brumbaugh K.M."/>
            <person name="Fang Y."/>
            <person name="Richardson D.A."/>
            <person name="Ali A."/>
            <person name="Chen S.M."/>
            <person name="Abraham R.T."/>
            <person name="Wang X.-F."/>
        </authorList>
    </citation>
    <scope>FUNCTION</scope>
    <scope>INTERACTION WITH ATM; ATR AND RAD1</scope>
    <scope>PHOSPHORYLATION AT SER-646 AND SER-656</scope>
    <scope>MUTAGENESIS OF SER-646 AND SER-656</scope>
</reference>
<reference key="19">
    <citation type="journal article" date="2001" name="Proc. Natl. Acad. Sci. U.S.A.">
        <title>Purification and characterization of human DNA damage checkpoint Rad complexes.</title>
        <authorList>
            <person name="Lindsey-Boltz L.A."/>
            <person name="Bermudez V.P."/>
            <person name="Hurwitz J."/>
            <person name="Sancar A."/>
        </authorList>
    </citation>
    <scope>IDENTIFICATION IN A COMPLEX WITH RFC2; RFC3; RFC4 AND RFC5</scope>
</reference>
<reference key="20">
    <citation type="journal article" date="2001" name="Proc. Natl. Acad. Sci. U.S.A.">
        <title>Phosphorylation of serines 635 and 645 of human Rad17 is cell cycle regulated and is required for G(1)/S checkpoint activation in response to DNA damage.</title>
        <authorList>
            <person name="Post S.M."/>
            <person name="Weng Y.-C."/>
            <person name="Cimprich K."/>
            <person name="Chen L.B."/>
            <person name="Xu Y."/>
            <person name="Lee E.Y.-H.P."/>
        </authorList>
    </citation>
    <scope>FUNCTION</scope>
    <scope>PHOSPHORYLATION AT SER-646 AND SER-656</scope>
    <scope>INTERACTION WITH RFC4</scope>
    <scope>MUTAGENESIS OF SER-191; SER-646 AND SER-656</scope>
</reference>
<reference key="21">
    <citation type="journal article" date="2002" name="Genes Dev.">
        <title>Regulation of ATR substrate selection by Rad17-dependent loading of Rad9 complexes onto chromatin.</title>
        <authorList>
            <person name="Zou L."/>
            <person name="Cortez D."/>
            <person name="Elledge S.J."/>
        </authorList>
    </citation>
    <scope>FUNCTION</scope>
    <scope>PHOSPHORYLATION</scope>
    <scope>MUTAGENESIS OF LYS-143</scope>
    <scope>SUBCELLULAR LOCATION</scope>
</reference>
<reference key="22">
    <citation type="journal article" date="2002" name="Oncogene">
        <title>Colocalization of human Rad17 and PCNA in late S phase of the cell cycle upon replication block.</title>
        <authorList>
            <person name="Dahm K."/>
            <person name="Huebscher U."/>
        </authorList>
    </citation>
    <scope>SUBCELLULAR LOCATION</scope>
    <scope>INTERACTION WITH RFC4</scope>
</reference>
<reference key="23">
    <citation type="journal article" date="2003" name="Genes Dev.">
        <title>Genomic instability and endoreduplication triggered by RAD17 deletion.</title>
        <authorList>
            <person name="Wang X."/>
            <person name="Zou L."/>
            <person name="Zheng H."/>
            <person name="Wei Q."/>
            <person name="Elledge S.J."/>
            <person name="Li L."/>
        </authorList>
    </citation>
    <scope>FUNCTION</scope>
</reference>
<reference key="24">
    <citation type="journal article" date="2003" name="Genomics">
        <title>Identification and characterization of RAD9B, a paralog of the RAD9 checkpoint gene.</title>
        <authorList>
            <person name="Dufault V.M."/>
            <person name="Oestreich A.J."/>
            <person name="Vroman B.T."/>
            <person name="Karnitz L.M."/>
        </authorList>
    </citation>
    <scope>INTERACTION WITH RAD9B</scope>
</reference>
<reference key="25">
    <citation type="journal article" date="2003" name="Nucleic Acids Res.">
        <title>The human checkpoint Rad protein Rad17 is chromatin-associated throughout the cell cycle, localizes to DNA replication sites, and interacts with DNA polymerase epsilon.</title>
        <authorList>
            <person name="Post S.M."/>
            <person name="Tomkinson A.E."/>
            <person name="Lee E.Y.-H.P."/>
        </authorList>
    </citation>
    <scope>FUNCTION</scope>
    <scope>PHOSPHORYLATION AT SER-646 AND SER-656</scope>
    <scope>MUTAGENESIS OF SER-646 AND SER-656</scope>
    <scope>INTERACTION WITH POLE</scope>
</reference>
<reference key="26">
    <citation type="journal article" date="2003" name="PLoS Biol.">
        <title>Biochemical characterization of DNA damage checkpoint complexes: clamp loader and clamp complexes with specificity for 5' recessed DNA.</title>
        <authorList>
            <person name="Ellison V."/>
            <person name="Stillman B."/>
        </authorList>
    </citation>
    <scope>FUNCTION</scope>
    <scope>INTERACTION WITH RFC2; RFC3; RFC4 AND RFC5</scope>
    <scope>IDENTIFICATION BY MASS SPECTROMETRY</scope>
</reference>
<reference key="27">
    <citation type="journal article" date="2003" name="Proc. Natl. Acad. Sci. U.S.A.">
        <title>Loading of the human 9-1-1 checkpoint complex onto DNA by the checkpoint clamp loader hRad17-replication factor C complex in vitro.</title>
        <authorList>
            <person name="Bermudez V.P."/>
            <person name="Lindsey-Boltz L.A."/>
            <person name="Cesare A.J."/>
            <person name="Maniwa Y."/>
            <person name="Griffith J.D."/>
            <person name="Hurwitz J."/>
            <person name="Sancar A."/>
        </authorList>
    </citation>
    <scope>FUNCTION</scope>
    <scope>INTERACTION WITH RAD1 AND RAD9</scope>
</reference>
<reference key="28">
    <citation type="journal article" date="2004" name="Genes Dev.">
        <title>Requirement of protein phosphatase 5 in DNA-damage-induced ATM activation.</title>
        <authorList>
            <person name="Ali A."/>
            <person name="Zhang J."/>
            <person name="Bao S."/>
            <person name="Liu I."/>
            <person name="Otterness D."/>
            <person name="Dean N.M."/>
            <person name="Abraham R.T."/>
            <person name="Wang X.F."/>
        </authorList>
    </citation>
    <scope>PHOSPHORYLATION AT SER-646</scope>
</reference>
<reference key="29">
    <citation type="journal article" date="2004" name="EMBO J.">
        <title>Interaction between human MCM7 and Rad17 proteins is required for replication checkpoint signaling.</title>
        <authorList>
            <person name="Tsao C.-C."/>
            <person name="Geisen C."/>
            <person name="Abraham R.T."/>
        </authorList>
    </citation>
    <scope>FUNCTION</scope>
    <scope>INTERACTION WITH MCM7</scope>
</reference>
<reference key="30">
    <citation type="journal article" date="2004" name="Mol. Cancer Res.">
        <title>Chromatin association of rad17 is required for an ataxia telangiectasia and rad-related kinase-mediated S-phase checkpoint in response to low-dose ultraviolet radiation.</title>
        <authorList>
            <person name="Garg R."/>
            <person name="Callens S."/>
            <person name="Lim D.-S."/>
            <person name="Canman C.E."/>
            <person name="Kastan M.B."/>
            <person name="Xu B."/>
        </authorList>
    </citation>
    <scope>FUNCTION</scope>
    <scope>MUTAGENESIS OF LYS-143; SER-646 AND SER-656</scope>
</reference>
<reference key="31">
    <citation type="journal article" date="2011" name="BMC Syst. Biol.">
        <title>Initial characterization of the human central proteome.</title>
        <authorList>
            <person name="Burkard T.R."/>
            <person name="Planyavsky M."/>
            <person name="Kaupe I."/>
            <person name="Breitwieser F.P."/>
            <person name="Buerckstuemmer T."/>
            <person name="Bennett K.L."/>
            <person name="Superti-Furga G."/>
            <person name="Colinge J."/>
        </authorList>
    </citation>
    <scope>IDENTIFICATION BY MASS SPECTROMETRY [LARGE SCALE ANALYSIS]</scope>
</reference>
<reference key="32">
    <citation type="journal article" date="2011" name="Science">
        <title>A DNA damage response screen identifies RHINO, a 9-1-1 and TopBP1 interacting protein required for ATR signaling.</title>
        <authorList>
            <person name="Cotta-Ramusino C."/>
            <person name="McDonald E.R. III"/>
            <person name="Hurov K."/>
            <person name="Sowa M.E."/>
            <person name="Harper J.W."/>
            <person name="Elledge S.J."/>
        </authorList>
    </citation>
    <scope>FUNCTION</scope>
</reference>
<reference key="33">
    <citation type="journal article" date="2013" name="J. Proteome Res.">
        <title>Toward a comprehensive characterization of a human cancer cell phosphoproteome.</title>
        <authorList>
            <person name="Zhou H."/>
            <person name="Di Palma S."/>
            <person name="Preisinger C."/>
            <person name="Peng M."/>
            <person name="Polat A.N."/>
            <person name="Heck A.J."/>
            <person name="Mohammed S."/>
        </authorList>
    </citation>
    <scope>PHOSPHORYLATION [LARGE SCALE ANALYSIS] AT SER-71; SER-86 AND SER-359</scope>
    <scope>IDENTIFICATION BY MASS SPECTROMETRY [LARGE SCALE ANALYSIS]</scope>
    <source>
        <tissue>Erythroleukemia</tissue>
    </source>
</reference>
<reference key="34">
    <citation type="journal article" date="2014" name="EMBO J.">
        <title>Rad17 recruits the MRE11-RAD50-NBS1 complex to regulate the cellular response to DNA double-strand breaks.</title>
        <authorList>
            <person name="Wang Q."/>
            <person name="Goldstein M."/>
            <person name="Alexander P."/>
            <person name="Wakeman T.P."/>
            <person name="Sun T."/>
            <person name="Feng J."/>
            <person name="Lou Z."/>
            <person name="Kastan M.B."/>
            <person name="Wang X.F."/>
        </authorList>
    </citation>
    <scope>FUNCTION</scope>
    <scope>SUBCELLULAR LOCATION</scope>
    <scope>INTERACTION WITH NBN</scope>
    <scope>PHOSPHORYLATION AT THR-633</scope>
    <scope>MUTAGENESIS OF THR-633; SER-646 AND SER-656</scope>
</reference>
<reference evidence="42" key="35">
    <citation type="journal article" date="2023" name="J. Biol. Chem.">
        <title>The 9-1-1 DNA clamp subunit RAD1 forms specific interactions with clamp loader RAD17, revealing functional implications for binding-protein RHINO.</title>
        <authorList>
            <person name="Hara K."/>
            <person name="Hishiki A."/>
            <person name="Hoshino T."/>
            <person name="Nagata K."/>
            <person name="Iida N."/>
            <person name="Sawada Y."/>
            <person name="Ohashi E."/>
            <person name="Hashimoto H."/>
        </authorList>
    </citation>
    <scope>X-RAY CRYSTALLOGRAPHY (2.12 ANGSTROMS) OF 16-26 IN COMPLEX WITH THE 9-1-1 COMPLEX</scope>
    <scope>INTERACTION WITH RAD1</scope>
    <scope>MUTAGENESIS OF 18-TRP--PHE-23</scope>
</reference>
<dbReference type="EMBL" id="AF076838">
    <property type="protein sequence ID" value="AAC95520.1"/>
    <property type="molecule type" value="mRNA"/>
</dbReference>
<dbReference type="EMBL" id="AJ004977">
    <property type="protein sequence ID" value="CAA06251.1"/>
    <property type="molecule type" value="mRNA"/>
</dbReference>
<dbReference type="EMBL" id="AF112263">
    <property type="protein sequence ID" value="AAD38878.1"/>
    <property type="molecule type" value="mRNA"/>
</dbReference>
<dbReference type="EMBL" id="AF085736">
    <property type="protein sequence ID" value="AAC36334.1"/>
    <property type="molecule type" value="mRNA"/>
</dbReference>
<dbReference type="EMBL" id="AJ001642">
    <property type="protein sequence ID" value="CAA04894.1"/>
    <property type="molecule type" value="mRNA"/>
</dbReference>
<dbReference type="EMBL" id="AJ131296">
    <property type="protein sequence ID" value="CAB46364.1"/>
    <property type="molecule type" value="Genomic_DNA"/>
</dbReference>
<dbReference type="EMBL" id="AJ131297">
    <property type="protein sequence ID" value="CAB46364.1"/>
    <property type="status" value="JOINED"/>
    <property type="molecule type" value="Genomic_DNA"/>
</dbReference>
<dbReference type="EMBL" id="AJ131298">
    <property type="protein sequence ID" value="CAB46364.1"/>
    <property type="status" value="JOINED"/>
    <property type="molecule type" value="Genomic_DNA"/>
</dbReference>
<dbReference type="EMBL" id="AJ131299">
    <property type="protein sequence ID" value="CAB46364.1"/>
    <property type="status" value="JOINED"/>
    <property type="molecule type" value="Genomic_DNA"/>
</dbReference>
<dbReference type="EMBL" id="AJ131300">
    <property type="protein sequence ID" value="CAB46364.1"/>
    <property type="status" value="JOINED"/>
    <property type="molecule type" value="Genomic_DNA"/>
</dbReference>
<dbReference type="EMBL" id="AJ131301">
    <property type="protein sequence ID" value="CAB46364.1"/>
    <property type="status" value="JOINED"/>
    <property type="molecule type" value="Genomic_DNA"/>
</dbReference>
<dbReference type="EMBL" id="AJ131302">
    <property type="protein sequence ID" value="CAB46364.1"/>
    <property type="status" value="JOINED"/>
    <property type="molecule type" value="Genomic_DNA"/>
</dbReference>
<dbReference type="EMBL" id="AJ131303">
    <property type="protein sequence ID" value="CAB46364.1"/>
    <property type="status" value="JOINED"/>
    <property type="molecule type" value="Genomic_DNA"/>
</dbReference>
<dbReference type="EMBL" id="AJ131304">
    <property type="protein sequence ID" value="CAB46364.1"/>
    <property type="status" value="JOINED"/>
    <property type="molecule type" value="Genomic_DNA"/>
</dbReference>
<dbReference type="EMBL" id="AJ131305">
    <property type="protein sequence ID" value="CAB46364.1"/>
    <property type="status" value="JOINED"/>
    <property type="molecule type" value="Genomic_DNA"/>
</dbReference>
<dbReference type="EMBL" id="AJ131306">
    <property type="protein sequence ID" value="CAB46364.1"/>
    <property type="status" value="JOINED"/>
    <property type="molecule type" value="Genomic_DNA"/>
</dbReference>
<dbReference type="EMBL" id="AJ131307">
    <property type="protein sequence ID" value="CAB46364.1"/>
    <property type="status" value="JOINED"/>
    <property type="molecule type" value="Genomic_DNA"/>
</dbReference>
<dbReference type="EMBL" id="AJ131308">
    <property type="protein sequence ID" value="CAB46364.1"/>
    <property type="status" value="JOINED"/>
    <property type="molecule type" value="Genomic_DNA"/>
</dbReference>
<dbReference type="EMBL" id="AF017748">
    <property type="protein sequence ID" value="AAD01620.1"/>
    <property type="molecule type" value="mRNA"/>
</dbReference>
<dbReference type="EMBL" id="AF126424">
    <property type="protein sequence ID" value="AAD17334.1"/>
    <property type="molecule type" value="mRNA"/>
</dbReference>
<dbReference type="EMBL" id="AF098533">
    <property type="protein sequence ID" value="AAC97950.1"/>
    <property type="molecule type" value="mRNA"/>
</dbReference>
<dbReference type="EMBL" id="AF098534">
    <property type="protein sequence ID" value="AAC97951.1"/>
    <property type="molecule type" value="mRNA"/>
</dbReference>
<dbReference type="EMBL" id="AL122068">
    <property type="protein sequence ID" value="CAB59244.1"/>
    <property type="molecule type" value="mRNA"/>
</dbReference>
<dbReference type="EMBL" id="AK292487">
    <property type="protein sequence ID" value="BAF85176.1"/>
    <property type="molecule type" value="mRNA"/>
</dbReference>
<dbReference type="EMBL" id="BX537441">
    <property type="protein sequence ID" value="CAD97683.1"/>
    <property type="molecule type" value="mRNA"/>
</dbReference>
<dbReference type="EMBL" id="AY612854">
    <property type="protein sequence ID" value="AAT09763.1"/>
    <property type="molecule type" value="Genomic_DNA"/>
</dbReference>
<dbReference type="EMBL" id="CH471137">
    <property type="protein sequence ID" value="EAW51283.1"/>
    <property type="molecule type" value="Genomic_DNA"/>
</dbReference>
<dbReference type="EMBL" id="CH471137">
    <property type="protein sequence ID" value="EAW51284.1"/>
    <property type="molecule type" value="Genomic_DNA"/>
</dbReference>
<dbReference type="EMBL" id="CH471137">
    <property type="protein sequence ID" value="EAW51285.1"/>
    <property type="molecule type" value="Genomic_DNA"/>
</dbReference>
<dbReference type="EMBL" id="CH471137">
    <property type="protein sequence ID" value="EAW51286.1"/>
    <property type="molecule type" value="Genomic_DNA"/>
</dbReference>
<dbReference type="EMBL" id="CH471137">
    <property type="protein sequence ID" value="EAW51288.1"/>
    <property type="molecule type" value="Genomic_DNA"/>
</dbReference>
<dbReference type="EMBL" id="BC032304">
    <property type="protein sequence ID" value="AAH32304.1"/>
    <property type="molecule type" value="mRNA"/>
</dbReference>
<dbReference type="CCDS" id="CCDS4003.1">
    <molecule id="O75943-1"/>
</dbReference>
<dbReference type="CCDS" id="CCDS4004.1">
    <molecule id="O75943-2"/>
</dbReference>
<dbReference type="CCDS" id="CCDS4005.1">
    <molecule id="O75943-4"/>
</dbReference>
<dbReference type="CCDS" id="CCDS47226.1">
    <molecule id="O75943-3"/>
</dbReference>
<dbReference type="PIR" id="T34548">
    <property type="entry name" value="T34548"/>
</dbReference>
<dbReference type="RefSeq" id="NP_001265551.1">
    <molecule id="O75943-2"/>
    <property type="nucleotide sequence ID" value="NM_001278622.1"/>
</dbReference>
<dbReference type="RefSeq" id="NP_002864.1">
    <molecule id="O75943-2"/>
    <property type="nucleotide sequence ID" value="NM_002873.1"/>
</dbReference>
<dbReference type="RefSeq" id="NP_579916.1">
    <molecule id="O75943-2"/>
    <property type="nucleotide sequence ID" value="NM_133338.3"/>
</dbReference>
<dbReference type="RefSeq" id="NP_579917.1">
    <molecule id="O75943-1"/>
    <property type="nucleotide sequence ID" value="NM_133339.2"/>
</dbReference>
<dbReference type="RefSeq" id="NP_579918.1">
    <molecule id="O75943-3"/>
    <property type="nucleotide sequence ID" value="NM_133340.2"/>
</dbReference>
<dbReference type="RefSeq" id="NP_579919.1">
    <molecule id="O75943-4"/>
    <property type="nucleotide sequence ID" value="NM_133341.2"/>
</dbReference>
<dbReference type="RefSeq" id="NP_579920.1">
    <molecule id="O75943-2"/>
    <property type="nucleotide sequence ID" value="NM_133342.3"/>
</dbReference>
<dbReference type="RefSeq" id="NP_579921.1">
    <molecule id="O75943-2"/>
    <property type="nucleotide sequence ID" value="NM_133343.2"/>
</dbReference>
<dbReference type="RefSeq" id="NP_579922.1">
    <molecule id="O75943-2"/>
    <property type="nucleotide sequence ID" value="NM_133344.3"/>
</dbReference>
<dbReference type="RefSeq" id="XP_016865168.1">
    <property type="nucleotide sequence ID" value="XM_017009679.1"/>
</dbReference>
<dbReference type="RefSeq" id="XP_016865169.1">
    <property type="nucleotide sequence ID" value="XM_017009680.1"/>
</dbReference>
<dbReference type="RefSeq" id="XP_016865170.1">
    <molecule id="O75943-2"/>
    <property type="nucleotide sequence ID" value="XM_017009681.2"/>
</dbReference>
<dbReference type="RefSeq" id="XP_047273412.1">
    <molecule id="O75943-2"/>
    <property type="nucleotide sequence ID" value="XM_047417456.1"/>
</dbReference>
<dbReference type="RefSeq" id="XP_047273413.1">
    <molecule id="O75943-2"/>
    <property type="nucleotide sequence ID" value="XM_047417457.1"/>
</dbReference>
<dbReference type="RefSeq" id="XP_047273414.1">
    <molecule id="O75943-2"/>
    <property type="nucleotide sequence ID" value="XM_047417458.1"/>
</dbReference>
<dbReference type="RefSeq" id="XP_047273415.1">
    <molecule id="O75943-2"/>
    <property type="nucleotide sequence ID" value="XM_047417459.1"/>
</dbReference>
<dbReference type="RefSeq" id="XP_047273416.1">
    <molecule id="O75943-2"/>
    <property type="nucleotide sequence ID" value="XM_047417460.1"/>
</dbReference>
<dbReference type="RefSeq" id="XP_047273417.1">
    <molecule id="O75943-4"/>
    <property type="nucleotide sequence ID" value="XM_047417461.1"/>
</dbReference>
<dbReference type="RefSeq" id="XP_047273418.1">
    <molecule id="O75943-4"/>
    <property type="nucleotide sequence ID" value="XM_047417462.1"/>
</dbReference>
<dbReference type="RefSeq" id="XP_054188991.1">
    <molecule id="O75943-2"/>
    <property type="nucleotide sequence ID" value="XM_054333016.1"/>
</dbReference>
<dbReference type="RefSeq" id="XP_054188992.1">
    <molecule id="O75943-2"/>
    <property type="nucleotide sequence ID" value="XM_054333017.1"/>
</dbReference>
<dbReference type="RefSeq" id="XP_054188993.1">
    <molecule id="O75943-2"/>
    <property type="nucleotide sequence ID" value="XM_054333018.1"/>
</dbReference>
<dbReference type="RefSeq" id="XP_054188994.1">
    <molecule id="O75943-2"/>
    <property type="nucleotide sequence ID" value="XM_054333019.1"/>
</dbReference>
<dbReference type="RefSeq" id="XP_054188995.1">
    <molecule id="O75943-2"/>
    <property type="nucleotide sequence ID" value="XM_054333020.1"/>
</dbReference>
<dbReference type="RefSeq" id="XP_054188996.1">
    <molecule id="O75943-2"/>
    <property type="nucleotide sequence ID" value="XM_054333021.1"/>
</dbReference>
<dbReference type="RefSeq" id="XP_054188997.1">
    <molecule id="O75943-4"/>
    <property type="nucleotide sequence ID" value="XM_054333022.1"/>
</dbReference>
<dbReference type="RefSeq" id="XP_054188998.1">
    <molecule id="O75943-4"/>
    <property type="nucleotide sequence ID" value="XM_054333023.1"/>
</dbReference>
<dbReference type="RefSeq" id="XP_054188999.1">
    <molecule id="O75943-4"/>
    <property type="nucleotide sequence ID" value="XM_054333024.1"/>
</dbReference>
<dbReference type="RefSeq" id="XP_054189000.1">
    <molecule id="O75943-4"/>
    <property type="nucleotide sequence ID" value="XM_054333025.1"/>
</dbReference>
<dbReference type="RefSeq" id="XP_054189001.1">
    <molecule id="O75943-4"/>
    <property type="nucleotide sequence ID" value="XM_054333026.1"/>
</dbReference>
<dbReference type="RefSeq" id="XP_054189002.1">
    <molecule id="O75943-4"/>
    <property type="nucleotide sequence ID" value="XM_054333027.1"/>
</dbReference>
<dbReference type="RefSeq" id="XP_054208999.1">
    <molecule id="O75943-2"/>
    <property type="nucleotide sequence ID" value="XM_054353024.1"/>
</dbReference>
<dbReference type="RefSeq" id="XP_054209000.1">
    <molecule id="O75943-2"/>
    <property type="nucleotide sequence ID" value="XM_054353025.1"/>
</dbReference>
<dbReference type="RefSeq" id="XP_054209001.1">
    <molecule id="O75943-2"/>
    <property type="nucleotide sequence ID" value="XM_054353026.1"/>
</dbReference>
<dbReference type="RefSeq" id="XP_054209002.1">
    <molecule id="O75943-2"/>
    <property type="nucleotide sequence ID" value="XM_054353027.1"/>
</dbReference>
<dbReference type="RefSeq" id="XP_054209003.1">
    <molecule id="O75943-2"/>
    <property type="nucleotide sequence ID" value="XM_054353028.1"/>
</dbReference>
<dbReference type="RefSeq" id="XP_054209004.1">
    <molecule id="O75943-2"/>
    <property type="nucleotide sequence ID" value="XM_054353029.1"/>
</dbReference>
<dbReference type="RefSeq" id="XP_054209005.1">
    <molecule id="O75943-4"/>
    <property type="nucleotide sequence ID" value="XM_054353030.1"/>
</dbReference>
<dbReference type="RefSeq" id="XP_054209006.1">
    <molecule id="O75943-4"/>
    <property type="nucleotide sequence ID" value="XM_054353031.1"/>
</dbReference>
<dbReference type="RefSeq" id="XP_054209007.1">
    <molecule id="O75943-4"/>
    <property type="nucleotide sequence ID" value="XM_054353032.1"/>
</dbReference>
<dbReference type="RefSeq" id="XP_054209008.1">
    <molecule id="O75943-4"/>
    <property type="nucleotide sequence ID" value="XM_054353033.1"/>
</dbReference>
<dbReference type="RefSeq" id="XP_054209009.1">
    <molecule id="O75943-4"/>
    <property type="nucleotide sequence ID" value="XM_054353034.1"/>
</dbReference>
<dbReference type="RefSeq" id="XP_054209010.1">
    <molecule id="O75943-4"/>
    <property type="nucleotide sequence ID" value="XM_054353035.1"/>
</dbReference>
<dbReference type="PDB" id="7Z6H">
    <property type="method" value="EM"/>
    <property type="resolution" value="3.59 A"/>
    <property type="chains" value="B/K=1-681"/>
</dbReference>
<dbReference type="PDB" id="8GNN">
    <property type="method" value="X-ray"/>
    <property type="resolution" value="2.12 A"/>
    <property type="chains" value="D=16-26"/>
</dbReference>
<dbReference type="PDBsum" id="7Z6H"/>
<dbReference type="PDBsum" id="8GNN"/>
<dbReference type="EMDB" id="EMD-14527"/>
<dbReference type="SMR" id="O75943"/>
<dbReference type="BioGRID" id="111821">
    <property type="interactions" value="107"/>
</dbReference>
<dbReference type="ComplexPortal" id="CPX-7931">
    <property type="entry name" value="DNA replication factor C complex, RAD17 variant"/>
</dbReference>
<dbReference type="CORUM" id="O75943"/>
<dbReference type="DIP" id="DIP-24254N"/>
<dbReference type="DIP" id="DIP-34896N"/>
<dbReference type="FunCoup" id="O75943">
    <property type="interactions" value="3563"/>
</dbReference>
<dbReference type="IntAct" id="O75943">
    <property type="interactions" value="66"/>
</dbReference>
<dbReference type="MINT" id="O75943"/>
<dbReference type="STRING" id="9606.ENSP00000426191"/>
<dbReference type="GlyGen" id="O75943">
    <property type="glycosylation" value="3 sites, 1 O-linked glycan (3 sites)"/>
</dbReference>
<dbReference type="iPTMnet" id="O75943"/>
<dbReference type="PhosphoSitePlus" id="O75943"/>
<dbReference type="BioMuta" id="RAD17"/>
<dbReference type="jPOST" id="O75943"/>
<dbReference type="MassIVE" id="O75943"/>
<dbReference type="PaxDb" id="9606-ENSP00000426191"/>
<dbReference type="PeptideAtlas" id="O75943"/>
<dbReference type="ProteomicsDB" id="50304">
    <molecule id="O75943-1"/>
</dbReference>
<dbReference type="ProteomicsDB" id="50305">
    <molecule id="O75943-2"/>
</dbReference>
<dbReference type="ProteomicsDB" id="50306">
    <molecule id="O75943-3"/>
</dbReference>
<dbReference type="ProteomicsDB" id="50307">
    <molecule id="O75943-4"/>
</dbReference>
<dbReference type="Pumba" id="O75943"/>
<dbReference type="Antibodypedia" id="1389">
    <property type="antibodies" value="653 antibodies from 41 providers"/>
</dbReference>
<dbReference type="DNASU" id="5884"/>
<dbReference type="Ensembl" id="ENST00000282891.10">
    <molecule id="O75943-4"/>
    <property type="protein sequence ID" value="ENSP00000282891.6"/>
    <property type="gene ID" value="ENSG00000152942.19"/>
</dbReference>
<dbReference type="Ensembl" id="ENST00000305138.8">
    <molecule id="O75943-2"/>
    <property type="protein sequence ID" value="ENSP00000303134.4"/>
    <property type="gene ID" value="ENSG00000152942.19"/>
</dbReference>
<dbReference type="Ensembl" id="ENST00000345306.10">
    <molecule id="O75943-2"/>
    <property type="protein sequence ID" value="ENSP00000311227.7"/>
    <property type="gene ID" value="ENSG00000152942.19"/>
</dbReference>
<dbReference type="Ensembl" id="ENST00000354312.7">
    <molecule id="O75943-2"/>
    <property type="protein sequence ID" value="ENSP00000346271.3"/>
    <property type="gene ID" value="ENSG00000152942.19"/>
</dbReference>
<dbReference type="Ensembl" id="ENST00000354868.10">
    <molecule id="O75943-2"/>
    <property type="protein sequence ID" value="ENSP00000346938.5"/>
    <property type="gene ID" value="ENSG00000152942.19"/>
</dbReference>
<dbReference type="Ensembl" id="ENST00000358030.6">
    <molecule id="O75943-3"/>
    <property type="protein sequence ID" value="ENSP00000350725.2"/>
    <property type="gene ID" value="ENSG00000152942.19"/>
</dbReference>
<dbReference type="Ensembl" id="ENST00000361732.6">
    <molecule id="O75943-2"/>
    <property type="protein sequence ID" value="ENSP00000355226.2"/>
    <property type="gene ID" value="ENSG00000152942.19"/>
</dbReference>
<dbReference type="Ensembl" id="ENST00000380774.7">
    <molecule id="O75943-1"/>
    <property type="protein sequence ID" value="ENSP00000370151.3"/>
    <property type="gene ID" value="ENSG00000152942.19"/>
</dbReference>
<dbReference type="Ensembl" id="ENST00000509734.5">
    <molecule id="O75943-1"/>
    <property type="protein sequence ID" value="ENSP00000426191.1"/>
    <property type="gene ID" value="ENSG00000152942.19"/>
</dbReference>
<dbReference type="Ensembl" id="ENST00000521422.5">
    <molecule id="O75943-3"/>
    <property type="protein sequence ID" value="ENSP00000427743.1"/>
    <property type="gene ID" value="ENSG00000152942.19"/>
</dbReference>
<dbReference type="Ensembl" id="ENST00000610770.4">
    <property type="protein sequence ID" value="ENSP00000478167.1"/>
    <property type="gene ID" value="ENSG00000276618.4"/>
</dbReference>
<dbReference type="Ensembl" id="ENST00000611523.4">
    <property type="protein sequence ID" value="ENSP00000477962.1"/>
    <property type="gene ID" value="ENSG00000276618.4"/>
</dbReference>
<dbReference type="Ensembl" id="ENST00000612044.4">
    <property type="protein sequence ID" value="ENSP00000477996.1"/>
    <property type="gene ID" value="ENSG00000276618.4"/>
</dbReference>
<dbReference type="Ensembl" id="ENST00000616488.2">
    <property type="protein sequence ID" value="ENSP00000484854.1"/>
    <property type="gene ID" value="ENSG00000276618.4"/>
</dbReference>
<dbReference type="Ensembl" id="ENST00000616683.4">
    <molecule id="O75943-2"/>
    <property type="protein sequence ID" value="ENSP00000482775.1"/>
    <property type="gene ID" value="ENSG00000152942.19"/>
</dbReference>
<dbReference type="Ensembl" id="ENST00000616759.4">
    <property type="protein sequence ID" value="ENSP00000479160.1"/>
    <property type="gene ID" value="ENSG00000276618.4"/>
</dbReference>
<dbReference type="Ensembl" id="ENST00000620889.4">
    <property type="protein sequence ID" value="ENSP00000482371.1"/>
    <property type="gene ID" value="ENSG00000276618.4"/>
</dbReference>
<dbReference type="GeneID" id="5884"/>
<dbReference type="KEGG" id="hsa:5884"/>
<dbReference type="MANE-Select" id="ENST00000354868.10">
    <molecule id="O75943-2"/>
    <property type="protein sequence ID" value="ENSP00000346938.5"/>
    <property type="RefSeq nucleotide sequence ID" value="NM_133338.3"/>
    <property type="RefSeq protein sequence ID" value="NP_579916.1"/>
</dbReference>
<dbReference type="UCSC" id="uc003jwg.4">
    <molecule id="O75943-1"/>
    <property type="organism name" value="human"/>
</dbReference>
<dbReference type="AGR" id="HGNC:9807"/>
<dbReference type="CTD" id="5884"/>
<dbReference type="DisGeNET" id="5884"/>
<dbReference type="GeneCards" id="RAD17"/>
<dbReference type="HGNC" id="HGNC:9807">
    <property type="gene designation" value="RAD17"/>
</dbReference>
<dbReference type="HPA" id="ENSG00000152942">
    <property type="expression patterns" value="Low tissue specificity"/>
</dbReference>
<dbReference type="MIM" id="603139">
    <property type="type" value="gene"/>
</dbReference>
<dbReference type="neXtProt" id="NX_O75943"/>
<dbReference type="OpenTargets" id="ENSG00000152942"/>
<dbReference type="PharmGKB" id="PA34167"/>
<dbReference type="VEuPathDB" id="HostDB:ENSG00000152942"/>
<dbReference type="eggNOG" id="KOG1970">
    <property type="taxonomic scope" value="Eukaryota"/>
</dbReference>
<dbReference type="GeneTree" id="ENSGT00440000039046"/>
<dbReference type="HOGENOM" id="CLU_018598_0_0_1"/>
<dbReference type="InParanoid" id="O75943"/>
<dbReference type="OMA" id="YNCLKMA"/>
<dbReference type="OrthoDB" id="10265971at2759"/>
<dbReference type="PAN-GO" id="O75943">
    <property type="GO annotations" value="4 GO annotations based on evolutionary models"/>
</dbReference>
<dbReference type="PhylomeDB" id="O75943"/>
<dbReference type="BRENDA" id="3.6.4.B8">
    <property type="organism ID" value="2681"/>
</dbReference>
<dbReference type="PathwayCommons" id="O75943"/>
<dbReference type="Reactome" id="R-HSA-176187">
    <property type="pathway name" value="Activation of ATR in response to replication stress"/>
</dbReference>
<dbReference type="Reactome" id="R-HSA-5685938">
    <property type="pathway name" value="HDR through Single Strand Annealing (SSA)"/>
</dbReference>
<dbReference type="Reactome" id="R-HSA-5693607">
    <property type="pathway name" value="Processing of DNA double-strand break ends"/>
</dbReference>
<dbReference type="Reactome" id="R-HSA-5693616">
    <property type="pathway name" value="Presynaptic phase of homologous DNA pairing and strand exchange"/>
</dbReference>
<dbReference type="Reactome" id="R-HSA-6804756">
    <property type="pathway name" value="Regulation of TP53 Activity through Phosphorylation"/>
</dbReference>
<dbReference type="Reactome" id="R-HSA-69473">
    <property type="pathway name" value="G2/M DNA damage checkpoint"/>
</dbReference>
<dbReference type="Reactome" id="R-HSA-9709570">
    <property type="pathway name" value="Impaired BRCA2 binding to RAD51"/>
</dbReference>
<dbReference type="SignaLink" id="O75943"/>
<dbReference type="SIGNOR" id="O75943"/>
<dbReference type="BioGRID-ORCS" id="5884">
    <property type="hits" value="670 hits in 1161 CRISPR screens"/>
</dbReference>
<dbReference type="CD-CODE" id="B5B9A610">
    <property type="entry name" value="PML body"/>
</dbReference>
<dbReference type="ChiTaRS" id="RAD17">
    <property type="organism name" value="human"/>
</dbReference>
<dbReference type="GeneWiki" id="RAD17"/>
<dbReference type="GenomeRNAi" id="5884"/>
<dbReference type="Pharos" id="O75943">
    <property type="development level" value="Tbio"/>
</dbReference>
<dbReference type="PRO" id="PR:O75943"/>
<dbReference type="Proteomes" id="UP000005640">
    <property type="component" value="Chromosome 5"/>
</dbReference>
<dbReference type="RNAct" id="O75943">
    <property type="molecule type" value="protein"/>
</dbReference>
<dbReference type="Bgee" id="ENSG00000152942">
    <property type="expression patterns" value="Expressed in primordial germ cell in gonad and 104 other cell types or tissues"/>
</dbReference>
<dbReference type="ExpressionAtlas" id="O75943">
    <property type="expression patterns" value="baseline and differential"/>
</dbReference>
<dbReference type="GO" id="GO:0005730">
    <property type="term" value="C:nucleolus"/>
    <property type="evidence" value="ECO:0000314"/>
    <property type="project" value="GO_Central"/>
</dbReference>
<dbReference type="GO" id="GO:0005654">
    <property type="term" value="C:nucleoplasm"/>
    <property type="evidence" value="ECO:0000314"/>
    <property type="project" value="HPA"/>
</dbReference>
<dbReference type="GO" id="GO:0005634">
    <property type="term" value="C:nucleus"/>
    <property type="evidence" value="ECO:0000304"/>
    <property type="project" value="ProtInc"/>
</dbReference>
<dbReference type="GO" id="GO:0031389">
    <property type="term" value="C:Rad17 RFC-like complex"/>
    <property type="evidence" value="ECO:0007669"/>
    <property type="project" value="InterPro"/>
</dbReference>
<dbReference type="GO" id="GO:0035861">
    <property type="term" value="C:site of double-strand break"/>
    <property type="evidence" value="ECO:0000314"/>
    <property type="project" value="UniProtKB"/>
</dbReference>
<dbReference type="GO" id="GO:0005524">
    <property type="term" value="F:ATP binding"/>
    <property type="evidence" value="ECO:0007669"/>
    <property type="project" value="UniProtKB-KW"/>
</dbReference>
<dbReference type="GO" id="GO:0003682">
    <property type="term" value="F:chromatin binding"/>
    <property type="evidence" value="ECO:0000318"/>
    <property type="project" value="GO_Central"/>
</dbReference>
<dbReference type="GO" id="GO:0140463">
    <property type="term" value="F:chromatin-protein adaptor activity"/>
    <property type="evidence" value="ECO:0000314"/>
    <property type="project" value="UniProtKB"/>
</dbReference>
<dbReference type="GO" id="GO:0003689">
    <property type="term" value="F:DNA clamp loader activity"/>
    <property type="evidence" value="ECO:0007669"/>
    <property type="project" value="InterPro"/>
</dbReference>
<dbReference type="GO" id="GO:0000077">
    <property type="term" value="P:DNA damage checkpoint signaling"/>
    <property type="evidence" value="ECO:0000318"/>
    <property type="project" value="GO_Central"/>
</dbReference>
<dbReference type="GO" id="GO:0006974">
    <property type="term" value="P:DNA damage response"/>
    <property type="evidence" value="ECO:0000315"/>
    <property type="project" value="UniProtKB"/>
</dbReference>
<dbReference type="GO" id="GO:0006281">
    <property type="term" value="P:DNA repair"/>
    <property type="evidence" value="ECO:0000318"/>
    <property type="project" value="GO_Central"/>
</dbReference>
<dbReference type="GO" id="GO:0000076">
    <property type="term" value="P:DNA replication checkpoint signaling"/>
    <property type="evidence" value="ECO:0000304"/>
    <property type="project" value="ProtInc"/>
</dbReference>
<dbReference type="GO" id="GO:0033314">
    <property type="term" value="P:mitotic DNA replication checkpoint signaling"/>
    <property type="evidence" value="ECO:0000318"/>
    <property type="project" value="GO_Central"/>
</dbReference>
<dbReference type="GO" id="GO:0031573">
    <property type="term" value="P:mitotic intra-S DNA damage checkpoint signaling"/>
    <property type="evidence" value="ECO:0000315"/>
    <property type="project" value="UniProtKB"/>
</dbReference>
<dbReference type="GO" id="GO:0008156">
    <property type="term" value="P:negative regulation of DNA replication"/>
    <property type="evidence" value="ECO:0000315"/>
    <property type="project" value="UniProtKB"/>
</dbReference>
<dbReference type="GO" id="GO:1990166">
    <property type="term" value="P:protein localization to site of double-strand break"/>
    <property type="evidence" value="ECO:0000314"/>
    <property type="project" value="UniProtKB"/>
</dbReference>
<dbReference type="GO" id="GO:0042325">
    <property type="term" value="P:regulation of phosphorylation"/>
    <property type="evidence" value="ECO:0000315"/>
    <property type="project" value="UniProtKB"/>
</dbReference>
<dbReference type="CDD" id="cd18139">
    <property type="entry name" value="HLD_clamp_RarA"/>
    <property type="match status" value="1"/>
</dbReference>
<dbReference type="FunFam" id="3.40.50.300:FF:000714">
    <property type="entry name" value="cell cycle checkpoint protein RAD17 isoform X1"/>
    <property type="match status" value="1"/>
</dbReference>
<dbReference type="Gene3D" id="3.40.50.300">
    <property type="entry name" value="P-loop containing nucleotide triphosphate hydrolases"/>
    <property type="match status" value="1"/>
</dbReference>
<dbReference type="InterPro" id="IPR004582">
    <property type="entry name" value="Checkpoint_prot_Rad17_Rad24"/>
</dbReference>
<dbReference type="InterPro" id="IPR027417">
    <property type="entry name" value="P-loop_NTPase"/>
</dbReference>
<dbReference type="InterPro" id="IPR018324">
    <property type="entry name" value="Rad17/Rad24_fun/met"/>
</dbReference>
<dbReference type="NCBIfam" id="TIGR00602">
    <property type="entry name" value="rad24"/>
    <property type="match status" value="1"/>
</dbReference>
<dbReference type="PANTHER" id="PTHR12172">
    <property type="entry name" value="CELL CYCLE CHECKPOINT PROTEIN RAD17"/>
    <property type="match status" value="1"/>
</dbReference>
<dbReference type="PANTHER" id="PTHR12172:SF2">
    <property type="entry name" value="CELL CYCLE CHECKPOINT PROTEIN RAD17"/>
    <property type="match status" value="1"/>
</dbReference>
<dbReference type="Pfam" id="PF03215">
    <property type="entry name" value="Rad17"/>
    <property type="match status" value="1"/>
</dbReference>
<dbReference type="SUPFAM" id="SSF52540">
    <property type="entry name" value="P-loop containing nucleoside triphosphate hydrolases"/>
    <property type="match status" value="1"/>
</dbReference>
<proteinExistence type="evidence at protein level"/>
<feature type="chain" id="PRO_0000209948" description="Cell cycle checkpoint protein RAD17">
    <location>
        <begin position="1"/>
        <end position="681"/>
    </location>
</feature>
<feature type="region of interest" description="Disordered" evidence="3">
    <location>
        <begin position="42"/>
        <end position="61"/>
    </location>
</feature>
<feature type="region of interest" description="Disordered" evidence="3">
    <location>
        <begin position="344"/>
        <end position="377"/>
    </location>
</feature>
<feature type="region of interest" description="Interaction with MCM7" evidence="23">
    <location>
        <begin position="432"/>
        <end position="681"/>
    </location>
</feature>
<feature type="region of interest" description="Disordered" evidence="3">
    <location>
        <begin position="606"/>
        <end position="681"/>
    </location>
</feature>
<feature type="short sequence motif" description="RAD1-binding motif" evidence="26">
    <location>
        <begin position="17"/>
        <end position="25"/>
    </location>
</feature>
<feature type="compositionally biased region" description="Polar residues" evidence="3">
    <location>
        <begin position="631"/>
        <end position="662"/>
    </location>
</feature>
<feature type="compositionally biased region" description="Acidic residues" evidence="3">
    <location>
        <begin position="666"/>
        <end position="681"/>
    </location>
</feature>
<feature type="binding site" evidence="2">
    <location>
        <begin position="137"/>
        <end position="144"/>
    </location>
    <ligand>
        <name>ATP</name>
        <dbReference type="ChEBI" id="CHEBI:30616"/>
    </ligand>
</feature>
<feature type="modified residue" description="Phosphothreonine" evidence="1">
    <location>
        <position position="55"/>
    </location>
</feature>
<feature type="modified residue" description="Phosphoserine" evidence="43">
    <location>
        <position position="71"/>
    </location>
</feature>
<feature type="modified residue" description="Phosphoserine" evidence="43">
    <location>
        <position position="86"/>
    </location>
</feature>
<feature type="modified residue" description="Phosphoserine" evidence="43">
    <location>
        <position position="359"/>
    </location>
</feature>
<feature type="modified residue" description="Phosphothreonine; by ATM" evidence="25">
    <location>
        <position position="633"/>
    </location>
</feature>
<feature type="modified residue" description="Phosphoserine; by ATR and ATM" evidence="9 12 17 20">
    <location>
        <position position="646"/>
    </location>
</feature>
<feature type="modified residue" description="Phosphoserine; by ATR and ATM" evidence="9 12 17">
    <location>
        <position position="656"/>
    </location>
</feature>
<feature type="splice variant" id="VSP_013306" description="In isoform 3." evidence="33">
    <location>
        <begin position="1"/>
        <end position="176"/>
    </location>
</feature>
<feature type="splice variant" id="VSP_013307" description="In isoform 4." evidence="33">
    <location>
        <begin position="1"/>
        <end position="97"/>
    </location>
</feature>
<feature type="splice variant" id="VSP_013308" description="In isoform 2." evidence="29 30 31 32 33 34 35 36 37 38 39">
    <original>MSKTFLRPKVSSTK</original>
    <variation>MNQ</variation>
    <location>
        <begin position="1"/>
        <end position="14"/>
    </location>
</feature>
<feature type="splice variant" id="VSP_013309" description="In isoform 4." evidence="33">
    <original>ET</original>
    <variation>MN</variation>
    <location>
        <begin position="98"/>
        <end position="99"/>
    </location>
</feature>
<feature type="sequence variant" id="VAR_021574" description="In dbSNP:rs17229831." evidence="28">
    <original>V</original>
    <variation>I</variation>
    <location>
        <position position="32"/>
    </location>
</feature>
<feature type="sequence variant" id="VAR_021575" description="In dbSNP:rs17236478." evidence="28">
    <original>R</original>
    <variation>L</variation>
    <location>
        <position position="487"/>
    </location>
</feature>
<feature type="sequence variant" id="VAR_021576" description="In dbSNP:rs17236485." evidence="28">
    <original>K</original>
    <variation>E</variation>
    <location>
        <position position="535"/>
    </location>
</feature>
<feature type="sequence variant" id="VAR_021577" description="In dbSNP:rs1045051." evidence="5 22 28">
    <original>L</original>
    <variation>R</variation>
    <location>
        <position position="557"/>
    </location>
</feature>
<feature type="mutagenesis site" description="Strongly reduced interaction with RAD1." evidence="26">
    <original>WVDPSF</original>
    <variation>AADPSA</variation>
    <location>
        <begin position="18"/>
        <end position="23"/>
    </location>
</feature>
<feature type="mutagenesis site" description="Impairs phosphorylation on S-656. Abolishes interaction with the RAD1-RAD9-HUS1 complex; does not affect interaction with RFC3." evidence="8 13 21">
    <original>K</original>
    <variation>E</variation>
    <location>
        <position position="143"/>
    </location>
</feature>
<feature type="mutagenesis site" description="Impairs phosphorylation. Impairs interaction with DNA and the RAD1-RAD9-HUS1 complex; does not affect interaction with RFC3." evidence="8 13 21">
    <original>K</original>
    <variation>G</variation>
    <location>
        <position position="143"/>
    </location>
</feature>
<feature type="mutagenesis site" description="No effect on phosphorylation by ATR." evidence="12">
    <original>S</original>
    <variation>A</variation>
    <location>
        <position position="191"/>
    </location>
</feature>
<feature type="mutagenesis site" description="Impaired phosphorylation by ATM and interaction with NBN." evidence="25">
    <original>T</original>
    <variation>A</variation>
    <location>
        <position position="633"/>
    </location>
</feature>
<feature type="mutagenesis site" description="Reduces by 50% phosphorylation by ATR, and abolishes interaction with RAD1. Abolishes phosphorylation by ATR and checkpoint activation without affecting interaction with RAD17, RFC3, RFC4, ATM or ATR; when associated with A-656." evidence="9 12 17 21 25">
    <original>S</original>
    <variation>A</variation>
    <location>
        <position position="646"/>
    </location>
</feature>
<feature type="mutagenesis site" description="Abolishes interaction with RAD1; when associated with D-656." evidence="9 12 17 21">
    <original>S</original>
    <variation>D</variation>
    <location>
        <position position="646"/>
    </location>
</feature>
<feature type="mutagenesis site" description="Reduces by 50% phosphorylation by ATR, and abolishes interaction with RAD1. Abolishes phosphorylation by ATR and checkpoint activation without affecting interaction with RAD17, RFC3, RFC4, ATM or ATR; when associated with A-646." evidence="9 12 17 21 25">
    <original>S</original>
    <variation>A</variation>
    <location>
        <position position="656"/>
    </location>
</feature>
<feature type="mutagenesis site" description="Abolishes interaction with RAD1; when associated with D-646." evidence="9 12 17 21">
    <original>S</original>
    <variation>D</variation>
    <location>
        <position position="656"/>
    </location>
</feature>
<feature type="sequence conflict" description="In Ref. 12; CAD97683." evidence="40" ref="12">
    <original>I</original>
    <variation>V</variation>
    <location>
        <position position="75"/>
    </location>
</feature>
<feature type="sequence conflict" description="In Ref. 5; AAC36334." evidence="40" ref="5">
    <original>F</original>
    <variation>L</variation>
    <location>
        <position position="187"/>
    </location>
</feature>
<feature type="sequence conflict" description="In Ref. 7; AAD01620." evidence="40" ref="7">
    <original>A</original>
    <variation>S</variation>
    <location>
        <position position="194"/>
    </location>
</feature>
<feature type="sequence conflict" description="In Ref. 5; AAC36334." evidence="40" ref="5">
    <original>L</original>
    <variation>P</variation>
    <location>
        <position position="340"/>
    </location>
</feature>
<feature type="sequence conflict" description="In Ref. 5; AAC36334." evidence="40" ref="5">
    <original>P</original>
    <variation>S</variation>
    <location>
        <position position="445"/>
    </location>
</feature>
<feature type="sequence conflict" description="In Ref. 5; AAC36334." evidence="40" ref="5">
    <original>M</original>
    <variation>T</variation>
    <location>
        <position position="462"/>
    </location>
</feature>
<feature type="sequence conflict" description="In Ref. 5; AAC36334." evidence="40" ref="5">
    <original>N</original>
    <variation>D</variation>
    <location>
        <position position="648"/>
    </location>
</feature>
<feature type="sequence conflict" description="In Ref. 5; AAC36334." evidence="40" ref="5">
    <original>I</original>
    <variation>M</variation>
    <location>
        <position position="672"/>
    </location>
</feature>
<protein>
    <recommendedName>
        <fullName>Cell cycle checkpoint protein RAD17</fullName>
        <shortName>hRad17</shortName>
    </recommendedName>
    <alternativeName>
        <fullName>RF-C/activator 1 homolog</fullName>
    </alternativeName>
</protein>
<evidence type="ECO:0000250" key="1">
    <source>
        <dbReference type="UniProtKB" id="Q9XT62"/>
    </source>
</evidence>
<evidence type="ECO:0000255" key="2"/>
<evidence type="ECO:0000256" key="3">
    <source>
        <dbReference type="SAM" id="MobiDB-lite"/>
    </source>
</evidence>
<evidence type="ECO:0000269" key="4">
    <source>
    </source>
</evidence>
<evidence type="ECO:0000269" key="5">
    <source>
    </source>
</evidence>
<evidence type="ECO:0000269" key="6">
    <source>
    </source>
</evidence>
<evidence type="ECO:0000269" key="7">
    <source>
    </source>
</evidence>
<evidence type="ECO:0000269" key="8">
    <source>
    </source>
</evidence>
<evidence type="ECO:0000269" key="9">
    <source>
    </source>
</evidence>
<evidence type="ECO:0000269" key="10">
    <source>
    </source>
</evidence>
<evidence type="ECO:0000269" key="11">
    <source>
    </source>
</evidence>
<evidence type="ECO:0000269" key="12">
    <source>
    </source>
</evidence>
<evidence type="ECO:0000269" key="13">
    <source>
    </source>
</evidence>
<evidence type="ECO:0000269" key="14">
    <source>
    </source>
</evidence>
<evidence type="ECO:0000269" key="15">
    <source>
    </source>
</evidence>
<evidence type="ECO:0000269" key="16">
    <source>
    </source>
</evidence>
<evidence type="ECO:0000269" key="17">
    <source>
    </source>
</evidence>
<evidence type="ECO:0000269" key="18">
    <source>
    </source>
</evidence>
<evidence type="ECO:0000269" key="19">
    <source>
    </source>
</evidence>
<evidence type="ECO:0000269" key="20">
    <source>
    </source>
</evidence>
<evidence type="ECO:0000269" key="21">
    <source>
    </source>
</evidence>
<evidence type="ECO:0000269" key="22">
    <source>
    </source>
</evidence>
<evidence type="ECO:0000269" key="23">
    <source>
    </source>
</evidence>
<evidence type="ECO:0000269" key="24">
    <source>
    </source>
</evidence>
<evidence type="ECO:0000269" key="25">
    <source>
    </source>
</evidence>
<evidence type="ECO:0000269" key="26">
    <source>
    </source>
</evidence>
<evidence type="ECO:0000269" key="27">
    <source>
    </source>
</evidence>
<evidence type="ECO:0000269" key="28">
    <source ref="13"/>
</evidence>
<evidence type="ECO:0000303" key="29">
    <source>
    </source>
</evidence>
<evidence type="ECO:0000303" key="30">
    <source>
    </source>
</evidence>
<evidence type="ECO:0000303" key="31">
    <source>
    </source>
</evidence>
<evidence type="ECO:0000303" key="32">
    <source>
    </source>
</evidence>
<evidence type="ECO:0000303" key="33">
    <source>
    </source>
</evidence>
<evidence type="ECO:0000303" key="34">
    <source>
    </source>
</evidence>
<evidence type="ECO:0000303" key="35">
    <source>
    </source>
</evidence>
<evidence type="ECO:0000303" key="36">
    <source>
    </source>
</evidence>
<evidence type="ECO:0000303" key="37">
    <source>
    </source>
</evidence>
<evidence type="ECO:0000303" key="38">
    <source>
    </source>
</evidence>
<evidence type="ECO:0000303" key="39">
    <source>
    </source>
</evidence>
<evidence type="ECO:0000305" key="40"/>
<evidence type="ECO:0000312" key="41">
    <source>
        <dbReference type="HGNC" id="HGNC:9807"/>
    </source>
</evidence>
<evidence type="ECO:0007744" key="42">
    <source>
        <dbReference type="PDB" id="8GNN"/>
    </source>
</evidence>
<evidence type="ECO:0007744" key="43">
    <source>
    </source>
</evidence>
<keyword id="KW-0002">3D-structure</keyword>
<keyword id="KW-0025">Alternative splicing</keyword>
<keyword id="KW-0067">ATP-binding</keyword>
<keyword id="KW-0131">Cell cycle</keyword>
<keyword id="KW-0158">Chromosome</keyword>
<keyword id="KW-0227">DNA damage</keyword>
<keyword id="KW-0547">Nucleotide-binding</keyword>
<keyword id="KW-0539">Nucleus</keyword>
<keyword id="KW-0597">Phosphoprotein</keyword>
<keyword id="KW-1267">Proteomics identification</keyword>
<keyword id="KW-1185">Reference proteome</keyword>
<sequence>MSKTFLRPKVSSTKVTDWVDPSFDDFLECSGVSTITATSLGVNNSSHRRKNGPSTLESSRFPARKRGNLSSLEQIYGLENSKEYLSENEPWVDKYKPETQHELAVHKKKIEEVETWLKAQVLERQPKQGGSILLITGPPGCGKTTTLKILSKEHGIQVQEWINPVLPDFQKDDFKGMFNTESSFHMFPYQSQIAVFKEFLLRATKYNKLQMLGDDLRTDKKIILVEDLPNQFYRDSHTLHEVLRKYVRIGRCPLIFIISDSLSGDNNQRLLFPKEIQEECSISNISFNPVAPTIMMKFLNRIVTIEANKNGGKITVPDKTSLELLCQGCSGDIRSAINSLQFSSSKGENNLRPRKKGMSLKSDAVLSKSKRRKKPDRVFENQEVQAIGGKDVSLFLFRALGKILYCKRASLTELDSPRLPSHLSEYERDTLLVEPEEVVEMSHMPGDLFNLYLHQNYIDFFMEIDDIVRASEFLSFADILSGDWNTRSLLREYSTSIATRGVMHSNKARGYAHCQGGGSSFRPLHKPQWFLINKKYRENCLAAKALFPDFCLPALCLQTQLLPYLALLTIPMRNQAQISFIQDIGRLPLKRHFGRLKMEALTDREHGMIDPDSGDEAQLNGGHSAEESLGEPTQATVPETWSLPLSQNSASELPASQPQPFSAQGDMEENIIIEDYESDGT</sequence>
<name>RAD17_HUMAN</name>